<protein>
    <recommendedName>
        <fullName evidence="1">tRNA 2-selenouridine synthase</fullName>
        <ecNumber evidence="1">2.9.1.3</ecNumber>
    </recommendedName>
</protein>
<accession>A8GYV2</accession>
<gene>
    <name evidence="1" type="primary">selU</name>
    <name type="ordered locus">Spea_0160</name>
</gene>
<keyword id="KW-1185">Reference proteome</keyword>
<keyword id="KW-0711">Selenium</keyword>
<keyword id="KW-0808">Transferase</keyword>
<reference key="1">
    <citation type="submission" date="2007-10" db="EMBL/GenBank/DDBJ databases">
        <title>Complete sequence of Shewanella pealeana ATCC 700345.</title>
        <authorList>
            <consortium name="US DOE Joint Genome Institute"/>
            <person name="Copeland A."/>
            <person name="Lucas S."/>
            <person name="Lapidus A."/>
            <person name="Barry K."/>
            <person name="Glavina del Rio T."/>
            <person name="Dalin E."/>
            <person name="Tice H."/>
            <person name="Pitluck S."/>
            <person name="Chertkov O."/>
            <person name="Brettin T."/>
            <person name="Bruce D."/>
            <person name="Detter J.C."/>
            <person name="Han C."/>
            <person name="Schmutz J."/>
            <person name="Larimer F."/>
            <person name="Land M."/>
            <person name="Hauser L."/>
            <person name="Kyrpides N."/>
            <person name="Kim E."/>
            <person name="Zhao J.-S.Z."/>
            <person name="Manno D."/>
            <person name="Hawari J."/>
            <person name="Richardson P."/>
        </authorList>
    </citation>
    <scope>NUCLEOTIDE SEQUENCE [LARGE SCALE GENOMIC DNA]</scope>
    <source>
        <strain>ATCC 700345 / ANG-SQ1</strain>
    </source>
</reference>
<sequence length="365" mass="41492">MTLNKVPASEYRRILVNDHPIMDARAPVEFEKGAFPASVNHPLMEDEERKKVGTCYKEHGQETAIKLGHSLVQGEIKQQRVDAWLDFFTKNPDGYLYCFRGGLRSQLTQQWLKEAGLDIPFIEGGYKAMRQFLIETIDNAANVKPMLILSGITGSGKTDFLLQRKEAVDLEGIAHHRGSSFGRYHEGQPSQINFENALAVALLKHQDTDAKHLLLEDESFLIGRSALPQAFYSGMQTASVLVLEESMDARLTRLLNEYVHKMHSGYIQRLGEEAGFEAFAQYLAQSITGIKKRLGGKQHDELQAMITDALSIQTSQNDTRGHLGWIELLLVKYYDPMYQYQIDKKAERILFKGDHQAMHQWLDDH</sequence>
<feature type="chain" id="PRO_1000088091" description="tRNA 2-selenouridine synthase">
    <location>
        <begin position="1"/>
        <end position="365"/>
    </location>
</feature>
<feature type="domain" description="Rhodanese" evidence="1">
    <location>
        <begin position="15"/>
        <end position="138"/>
    </location>
</feature>
<feature type="active site" description="S-selanylcysteine intermediate" evidence="1">
    <location>
        <position position="98"/>
    </location>
</feature>
<comment type="function">
    <text evidence="1">Involved in the post-transcriptional modification of the uridine at the wobble position (U34) of tRNA(Lys), tRNA(Glu) and tRNA(Gln). Catalyzes the conversion of 2-thiouridine (S2U-RNA) to 2-selenouridine (Se2U-RNA). Acts in a two-step process involving geranylation of 2-thiouridine (S2U) to S-geranyl-2-thiouridine (geS2U) and subsequent selenation of the latter derivative to 2-selenouridine (Se2U) in the tRNA chain.</text>
</comment>
<comment type="catalytic activity">
    <reaction evidence="1">
        <text>5-methylaminomethyl-2-thiouridine(34) in tRNA + selenophosphate + (2E)-geranyl diphosphate + H2O + H(+) = 5-methylaminomethyl-2-selenouridine(34) in tRNA + (2E)-thiogeraniol + phosphate + diphosphate</text>
        <dbReference type="Rhea" id="RHEA:42716"/>
        <dbReference type="Rhea" id="RHEA-COMP:10195"/>
        <dbReference type="Rhea" id="RHEA-COMP:10196"/>
        <dbReference type="ChEBI" id="CHEBI:15377"/>
        <dbReference type="ChEBI" id="CHEBI:15378"/>
        <dbReference type="ChEBI" id="CHEBI:16144"/>
        <dbReference type="ChEBI" id="CHEBI:33019"/>
        <dbReference type="ChEBI" id="CHEBI:43474"/>
        <dbReference type="ChEBI" id="CHEBI:58057"/>
        <dbReference type="ChEBI" id="CHEBI:74455"/>
        <dbReference type="ChEBI" id="CHEBI:82743"/>
        <dbReference type="ChEBI" id="CHEBI:143703"/>
        <dbReference type="EC" id="2.9.1.3"/>
    </reaction>
    <physiologicalReaction direction="left-to-right" evidence="1">
        <dbReference type="Rhea" id="RHEA:42717"/>
    </physiologicalReaction>
</comment>
<comment type="catalytic activity">
    <reaction evidence="1">
        <text>5-methylaminomethyl-2-thiouridine(34) in tRNA + (2E)-geranyl diphosphate = 5-methylaminomethyl-S-(2E)-geranyl-thiouridine(34) in tRNA + diphosphate</text>
        <dbReference type="Rhea" id="RHEA:14085"/>
        <dbReference type="Rhea" id="RHEA-COMP:10195"/>
        <dbReference type="Rhea" id="RHEA-COMP:14654"/>
        <dbReference type="ChEBI" id="CHEBI:33019"/>
        <dbReference type="ChEBI" id="CHEBI:58057"/>
        <dbReference type="ChEBI" id="CHEBI:74455"/>
        <dbReference type="ChEBI" id="CHEBI:140632"/>
    </reaction>
    <physiologicalReaction direction="left-to-right" evidence="1">
        <dbReference type="Rhea" id="RHEA:14086"/>
    </physiologicalReaction>
</comment>
<comment type="catalytic activity">
    <reaction evidence="1">
        <text>5-methylaminomethyl-S-(2E)-geranyl-thiouridine(34) in tRNA + selenophosphate + H(+) = 5-methylaminomethyl-2-(Se-phospho)selenouridine(34) in tRNA + (2E)-thiogeraniol</text>
        <dbReference type="Rhea" id="RHEA:60172"/>
        <dbReference type="Rhea" id="RHEA-COMP:14654"/>
        <dbReference type="Rhea" id="RHEA-COMP:15523"/>
        <dbReference type="ChEBI" id="CHEBI:15378"/>
        <dbReference type="ChEBI" id="CHEBI:16144"/>
        <dbReference type="ChEBI" id="CHEBI:140632"/>
        <dbReference type="ChEBI" id="CHEBI:143702"/>
        <dbReference type="ChEBI" id="CHEBI:143703"/>
    </reaction>
    <physiologicalReaction direction="left-to-right" evidence="1">
        <dbReference type="Rhea" id="RHEA:60173"/>
    </physiologicalReaction>
</comment>
<comment type="catalytic activity">
    <reaction evidence="1">
        <text>5-methylaminomethyl-2-(Se-phospho)selenouridine(34) in tRNA + H2O = 5-methylaminomethyl-2-selenouridine(34) in tRNA + phosphate</text>
        <dbReference type="Rhea" id="RHEA:60176"/>
        <dbReference type="Rhea" id="RHEA-COMP:10196"/>
        <dbReference type="Rhea" id="RHEA-COMP:15523"/>
        <dbReference type="ChEBI" id="CHEBI:15377"/>
        <dbReference type="ChEBI" id="CHEBI:43474"/>
        <dbReference type="ChEBI" id="CHEBI:82743"/>
        <dbReference type="ChEBI" id="CHEBI:143702"/>
    </reaction>
    <physiologicalReaction direction="left-to-right" evidence="1">
        <dbReference type="Rhea" id="RHEA:60177"/>
    </physiologicalReaction>
</comment>
<comment type="subunit">
    <text evidence="1">Monomer.</text>
</comment>
<comment type="similarity">
    <text evidence="1">Belongs to the SelU family.</text>
</comment>
<name>SELU_SHEPA</name>
<evidence type="ECO:0000255" key="1">
    <source>
        <dbReference type="HAMAP-Rule" id="MF_01622"/>
    </source>
</evidence>
<dbReference type="EC" id="2.9.1.3" evidence="1"/>
<dbReference type="EMBL" id="CP000851">
    <property type="protein sequence ID" value="ABV85489.1"/>
    <property type="molecule type" value="Genomic_DNA"/>
</dbReference>
<dbReference type="RefSeq" id="WP_012153435.1">
    <property type="nucleotide sequence ID" value="NC_009901.1"/>
</dbReference>
<dbReference type="SMR" id="A8GYV2"/>
<dbReference type="STRING" id="398579.Spea_0160"/>
<dbReference type="KEGG" id="spl:Spea_0160"/>
<dbReference type="eggNOG" id="COG2603">
    <property type="taxonomic scope" value="Bacteria"/>
</dbReference>
<dbReference type="HOGENOM" id="CLU_043456_1_0_6"/>
<dbReference type="OrthoDB" id="9808735at2"/>
<dbReference type="Proteomes" id="UP000002608">
    <property type="component" value="Chromosome"/>
</dbReference>
<dbReference type="GO" id="GO:0016765">
    <property type="term" value="F:transferase activity, transferring alkyl or aryl (other than methyl) groups"/>
    <property type="evidence" value="ECO:0007669"/>
    <property type="project" value="UniProtKB-UniRule"/>
</dbReference>
<dbReference type="GO" id="GO:0043828">
    <property type="term" value="F:tRNA 2-selenouridine synthase activity"/>
    <property type="evidence" value="ECO:0007669"/>
    <property type="project" value="UniProtKB-EC"/>
</dbReference>
<dbReference type="GO" id="GO:0002098">
    <property type="term" value="P:tRNA wobble uridine modification"/>
    <property type="evidence" value="ECO:0007669"/>
    <property type="project" value="UniProtKB-UniRule"/>
</dbReference>
<dbReference type="Gene3D" id="3.40.250.10">
    <property type="entry name" value="Rhodanese-like domain"/>
    <property type="match status" value="1"/>
</dbReference>
<dbReference type="HAMAP" id="MF_01622">
    <property type="entry name" value="tRNA_sel_U_synth"/>
    <property type="match status" value="1"/>
</dbReference>
<dbReference type="InterPro" id="IPR001763">
    <property type="entry name" value="Rhodanese-like_dom"/>
</dbReference>
<dbReference type="InterPro" id="IPR036873">
    <property type="entry name" value="Rhodanese-like_dom_sf"/>
</dbReference>
<dbReference type="InterPro" id="IPR017582">
    <property type="entry name" value="SelU"/>
</dbReference>
<dbReference type="NCBIfam" id="NF008750">
    <property type="entry name" value="PRK11784.1-2"/>
    <property type="match status" value="1"/>
</dbReference>
<dbReference type="NCBIfam" id="NF008751">
    <property type="entry name" value="PRK11784.1-3"/>
    <property type="match status" value="1"/>
</dbReference>
<dbReference type="NCBIfam" id="TIGR03167">
    <property type="entry name" value="tRNA_sel_U_synt"/>
    <property type="match status" value="1"/>
</dbReference>
<dbReference type="PANTHER" id="PTHR30401">
    <property type="entry name" value="TRNA 2-SELENOURIDINE SYNTHASE"/>
    <property type="match status" value="1"/>
</dbReference>
<dbReference type="PANTHER" id="PTHR30401:SF0">
    <property type="entry name" value="TRNA 2-SELENOURIDINE SYNTHASE"/>
    <property type="match status" value="1"/>
</dbReference>
<dbReference type="Pfam" id="PF00581">
    <property type="entry name" value="Rhodanese"/>
    <property type="match status" value="1"/>
</dbReference>
<dbReference type="SMART" id="SM00450">
    <property type="entry name" value="RHOD"/>
    <property type="match status" value="1"/>
</dbReference>
<dbReference type="SUPFAM" id="SSF52821">
    <property type="entry name" value="Rhodanese/Cell cycle control phosphatase"/>
    <property type="match status" value="1"/>
</dbReference>
<dbReference type="PROSITE" id="PS50206">
    <property type="entry name" value="RHODANESE_3"/>
    <property type="match status" value="1"/>
</dbReference>
<proteinExistence type="inferred from homology"/>
<organism>
    <name type="scientific">Shewanella pealeana (strain ATCC 700345 / ANG-SQ1)</name>
    <dbReference type="NCBI Taxonomy" id="398579"/>
    <lineage>
        <taxon>Bacteria</taxon>
        <taxon>Pseudomonadati</taxon>
        <taxon>Pseudomonadota</taxon>
        <taxon>Gammaproteobacteria</taxon>
        <taxon>Alteromonadales</taxon>
        <taxon>Shewanellaceae</taxon>
        <taxon>Shewanella</taxon>
    </lineage>
</organism>